<organism>
    <name type="scientific">Blarina carolinensis</name>
    <name type="common">Southern short-tailed shrew</name>
    <dbReference type="NCBI Taxonomy" id="183658"/>
    <lineage>
        <taxon>Eukaryota</taxon>
        <taxon>Metazoa</taxon>
        <taxon>Chordata</taxon>
        <taxon>Craniata</taxon>
        <taxon>Vertebrata</taxon>
        <taxon>Euteleostomi</taxon>
        <taxon>Mammalia</taxon>
        <taxon>Eutheria</taxon>
        <taxon>Laurasiatheria</taxon>
        <taxon>Eulipotyphla</taxon>
        <taxon>Soricidae</taxon>
        <taxon>Soricinae</taxon>
        <taxon>Blarina</taxon>
    </lineage>
</organism>
<protein>
    <recommendedName>
        <fullName>Cytochrome b</fullName>
    </recommendedName>
    <alternativeName>
        <fullName>Complex III subunit 3</fullName>
    </alternativeName>
    <alternativeName>
        <fullName>Complex III subunit III</fullName>
    </alternativeName>
    <alternativeName>
        <fullName>Cytochrome b-c1 complex subunit 3</fullName>
    </alternativeName>
    <alternativeName>
        <fullName>Ubiquinol-cytochrome-c reductase complex cytochrome b subunit</fullName>
    </alternativeName>
</protein>
<evidence type="ECO:0000250" key="1"/>
<evidence type="ECO:0000250" key="2">
    <source>
        <dbReference type="UniProtKB" id="P00157"/>
    </source>
</evidence>
<evidence type="ECO:0000255" key="3">
    <source>
        <dbReference type="PROSITE-ProRule" id="PRU00967"/>
    </source>
</evidence>
<evidence type="ECO:0000255" key="4">
    <source>
        <dbReference type="PROSITE-ProRule" id="PRU00968"/>
    </source>
</evidence>
<keyword id="KW-0249">Electron transport</keyword>
<keyword id="KW-0349">Heme</keyword>
<keyword id="KW-0408">Iron</keyword>
<keyword id="KW-0472">Membrane</keyword>
<keyword id="KW-0479">Metal-binding</keyword>
<keyword id="KW-0496">Mitochondrion</keyword>
<keyword id="KW-0999">Mitochondrion inner membrane</keyword>
<keyword id="KW-0679">Respiratory chain</keyword>
<keyword id="KW-0812">Transmembrane</keyword>
<keyword id="KW-1133">Transmembrane helix</keyword>
<keyword id="KW-0813">Transport</keyword>
<keyword id="KW-0830">Ubiquinone</keyword>
<reference key="1">
    <citation type="journal article" date="2002" name="Mol. Phylogenet. Evol.">
        <title>Molecular phylogeny of short-tailed shrews, Blarina (Insectivora; Soricidae).</title>
        <authorList>
            <person name="Brant S.V."/>
            <person name="Orti G."/>
        </authorList>
    </citation>
    <scope>NUCLEOTIDE SEQUENCE [GENOMIC DNA]</scope>
    <source>
        <strain>Isolate 1155ca</strain>
    </source>
</reference>
<sequence>MTNIRKTHPLMKIINSSFIDLPAPSNISSWWNFGSLLGICLIIQILTGLFLAMHYTSDTMTAFSSVTHICRDVNYGWLIRYLHANGASMFFICLFLHVGRGLYYGSYMFSETWNIGVLLLFAVMATAFMGYVLPWGQMSFWGATVITNLLSAIPYIGSDLVQWIWGGFSVDKATLTRFFAFHFILPFVIAALAGVHLLFLHETGSNNPSGLSSDADKIPFHPYYTIKDILGVLILILVLTCLVLFSPDLLGDPDNYTPANPLNTPPHIKPEWYFLFAYAILRSIPNKLGGVLALVLSILILAFIPLLHTSKQRSMMFRPFSQCLFWILVADLLTLTWIGGQPVEHPFIIIGQLASILYFLLLLVIMPITSLFENNLLKW</sequence>
<feature type="chain" id="PRO_0000060675" description="Cytochrome b">
    <location>
        <begin position="1"/>
        <end position="379"/>
    </location>
</feature>
<feature type="transmembrane region" description="Helical" evidence="2">
    <location>
        <begin position="33"/>
        <end position="53"/>
    </location>
</feature>
<feature type="transmembrane region" description="Helical" evidence="2">
    <location>
        <begin position="77"/>
        <end position="98"/>
    </location>
</feature>
<feature type="transmembrane region" description="Helical" evidence="2">
    <location>
        <begin position="113"/>
        <end position="133"/>
    </location>
</feature>
<feature type="transmembrane region" description="Helical" evidence="2">
    <location>
        <begin position="178"/>
        <end position="198"/>
    </location>
</feature>
<feature type="transmembrane region" description="Helical" evidence="2">
    <location>
        <begin position="226"/>
        <end position="246"/>
    </location>
</feature>
<feature type="transmembrane region" description="Helical" evidence="2">
    <location>
        <begin position="288"/>
        <end position="308"/>
    </location>
</feature>
<feature type="transmembrane region" description="Helical" evidence="2">
    <location>
        <begin position="320"/>
        <end position="340"/>
    </location>
</feature>
<feature type="transmembrane region" description="Helical" evidence="2">
    <location>
        <begin position="347"/>
        <end position="367"/>
    </location>
</feature>
<feature type="binding site" description="axial binding residue" evidence="2">
    <location>
        <position position="83"/>
    </location>
    <ligand>
        <name>heme b</name>
        <dbReference type="ChEBI" id="CHEBI:60344"/>
        <label>b562</label>
    </ligand>
    <ligandPart>
        <name>Fe</name>
        <dbReference type="ChEBI" id="CHEBI:18248"/>
    </ligandPart>
</feature>
<feature type="binding site" description="axial binding residue" evidence="2">
    <location>
        <position position="97"/>
    </location>
    <ligand>
        <name>heme b</name>
        <dbReference type="ChEBI" id="CHEBI:60344"/>
        <label>b566</label>
    </ligand>
    <ligandPart>
        <name>Fe</name>
        <dbReference type="ChEBI" id="CHEBI:18248"/>
    </ligandPart>
</feature>
<feature type="binding site" description="axial binding residue" evidence="2">
    <location>
        <position position="182"/>
    </location>
    <ligand>
        <name>heme b</name>
        <dbReference type="ChEBI" id="CHEBI:60344"/>
        <label>b562</label>
    </ligand>
    <ligandPart>
        <name>Fe</name>
        <dbReference type="ChEBI" id="CHEBI:18248"/>
    </ligandPart>
</feature>
<feature type="binding site" description="axial binding residue" evidence="2">
    <location>
        <position position="196"/>
    </location>
    <ligand>
        <name>heme b</name>
        <dbReference type="ChEBI" id="CHEBI:60344"/>
        <label>b566</label>
    </ligand>
    <ligandPart>
        <name>Fe</name>
        <dbReference type="ChEBI" id="CHEBI:18248"/>
    </ligandPart>
</feature>
<feature type="binding site" evidence="2">
    <location>
        <position position="201"/>
    </location>
    <ligand>
        <name>a ubiquinone</name>
        <dbReference type="ChEBI" id="CHEBI:16389"/>
    </ligand>
</feature>
<accession>Q8WCL1</accession>
<dbReference type="EMBL" id="AF395457">
    <property type="protein sequence ID" value="AAL65878.1"/>
    <property type="molecule type" value="Genomic_DNA"/>
</dbReference>
<dbReference type="SMR" id="Q8WCL1"/>
<dbReference type="GO" id="GO:0005743">
    <property type="term" value="C:mitochondrial inner membrane"/>
    <property type="evidence" value="ECO:0007669"/>
    <property type="project" value="UniProtKB-SubCell"/>
</dbReference>
<dbReference type="GO" id="GO:0045275">
    <property type="term" value="C:respiratory chain complex III"/>
    <property type="evidence" value="ECO:0007669"/>
    <property type="project" value="InterPro"/>
</dbReference>
<dbReference type="GO" id="GO:0046872">
    <property type="term" value="F:metal ion binding"/>
    <property type="evidence" value="ECO:0007669"/>
    <property type="project" value="UniProtKB-KW"/>
</dbReference>
<dbReference type="GO" id="GO:0008121">
    <property type="term" value="F:ubiquinol-cytochrome-c reductase activity"/>
    <property type="evidence" value="ECO:0007669"/>
    <property type="project" value="InterPro"/>
</dbReference>
<dbReference type="GO" id="GO:0006122">
    <property type="term" value="P:mitochondrial electron transport, ubiquinol to cytochrome c"/>
    <property type="evidence" value="ECO:0007669"/>
    <property type="project" value="TreeGrafter"/>
</dbReference>
<dbReference type="CDD" id="cd00290">
    <property type="entry name" value="cytochrome_b_C"/>
    <property type="match status" value="1"/>
</dbReference>
<dbReference type="CDD" id="cd00284">
    <property type="entry name" value="Cytochrome_b_N"/>
    <property type="match status" value="1"/>
</dbReference>
<dbReference type="FunFam" id="1.20.810.10:FF:000002">
    <property type="entry name" value="Cytochrome b"/>
    <property type="match status" value="1"/>
</dbReference>
<dbReference type="Gene3D" id="1.20.810.10">
    <property type="entry name" value="Cytochrome Bc1 Complex, Chain C"/>
    <property type="match status" value="1"/>
</dbReference>
<dbReference type="InterPro" id="IPR005798">
    <property type="entry name" value="Cyt_b/b6_C"/>
</dbReference>
<dbReference type="InterPro" id="IPR036150">
    <property type="entry name" value="Cyt_b/b6_C_sf"/>
</dbReference>
<dbReference type="InterPro" id="IPR005797">
    <property type="entry name" value="Cyt_b/b6_N"/>
</dbReference>
<dbReference type="InterPro" id="IPR027387">
    <property type="entry name" value="Cytb/b6-like_sf"/>
</dbReference>
<dbReference type="InterPro" id="IPR030689">
    <property type="entry name" value="Cytochrome_b"/>
</dbReference>
<dbReference type="InterPro" id="IPR048260">
    <property type="entry name" value="Cytochrome_b_C_euk/bac"/>
</dbReference>
<dbReference type="InterPro" id="IPR048259">
    <property type="entry name" value="Cytochrome_b_N_euk/bac"/>
</dbReference>
<dbReference type="InterPro" id="IPR016174">
    <property type="entry name" value="Di-haem_cyt_TM"/>
</dbReference>
<dbReference type="PANTHER" id="PTHR19271">
    <property type="entry name" value="CYTOCHROME B"/>
    <property type="match status" value="1"/>
</dbReference>
<dbReference type="PANTHER" id="PTHR19271:SF16">
    <property type="entry name" value="CYTOCHROME B"/>
    <property type="match status" value="1"/>
</dbReference>
<dbReference type="Pfam" id="PF00032">
    <property type="entry name" value="Cytochrom_B_C"/>
    <property type="match status" value="1"/>
</dbReference>
<dbReference type="Pfam" id="PF00033">
    <property type="entry name" value="Cytochrome_B"/>
    <property type="match status" value="1"/>
</dbReference>
<dbReference type="PIRSF" id="PIRSF038885">
    <property type="entry name" value="COB"/>
    <property type="match status" value="1"/>
</dbReference>
<dbReference type="SUPFAM" id="SSF81648">
    <property type="entry name" value="a domain/subunit of cytochrome bc1 complex (Ubiquinol-cytochrome c reductase)"/>
    <property type="match status" value="1"/>
</dbReference>
<dbReference type="SUPFAM" id="SSF81342">
    <property type="entry name" value="Transmembrane di-heme cytochromes"/>
    <property type="match status" value="1"/>
</dbReference>
<dbReference type="PROSITE" id="PS51003">
    <property type="entry name" value="CYTB_CTER"/>
    <property type="match status" value="1"/>
</dbReference>
<dbReference type="PROSITE" id="PS51002">
    <property type="entry name" value="CYTB_NTER"/>
    <property type="match status" value="1"/>
</dbReference>
<proteinExistence type="inferred from homology"/>
<gene>
    <name type="primary">MT-CYB</name>
    <name type="synonym">COB</name>
    <name type="synonym">CYTB</name>
    <name type="synonym">MTCYB</name>
</gene>
<comment type="function">
    <text evidence="2">Component of the ubiquinol-cytochrome c reductase complex (complex III or cytochrome b-c1 complex) that is part of the mitochondrial respiratory chain. The b-c1 complex mediates electron transfer from ubiquinol to cytochrome c. Contributes to the generation of a proton gradient across the mitochondrial membrane that is then used for ATP synthesis.</text>
</comment>
<comment type="cofactor">
    <cofactor evidence="2">
        <name>heme b</name>
        <dbReference type="ChEBI" id="CHEBI:60344"/>
    </cofactor>
    <text evidence="2">Binds 2 heme b groups non-covalently.</text>
</comment>
<comment type="subunit">
    <text evidence="2">The cytochrome bc1 complex contains 11 subunits: 3 respiratory subunits (MT-CYB, CYC1 and UQCRFS1), 2 core proteins (UQCRC1 and UQCRC2) and 6 low-molecular weight proteins (UQCRH/QCR6, UQCRB/QCR7, UQCRQ/QCR8, UQCR10/QCR9, UQCR11/QCR10 and a cleavage product of UQCRFS1). This cytochrome bc1 complex then forms a dimer.</text>
</comment>
<comment type="subcellular location">
    <subcellularLocation>
        <location evidence="2">Mitochondrion inner membrane</location>
        <topology evidence="2">Multi-pass membrane protein</topology>
    </subcellularLocation>
</comment>
<comment type="miscellaneous">
    <text evidence="1">Heme 1 (or BL or b562) is low-potential and absorbs at about 562 nm, and heme 2 (or BH or b566) is high-potential and absorbs at about 566 nm.</text>
</comment>
<comment type="similarity">
    <text evidence="3 4">Belongs to the cytochrome b family.</text>
</comment>
<comment type="caution">
    <text evidence="2">The full-length protein contains only eight transmembrane helices, not nine as predicted by bioinformatics tools.</text>
</comment>
<geneLocation type="mitochondrion"/>
<name>CYB_BLACA</name>